<reference key="1">
    <citation type="journal article" date="2000" name="Nature">
        <title>Sequence and analysis of chromosome 1 of the plant Arabidopsis thaliana.</title>
        <authorList>
            <person name="Theologis A."/>
            <person name="Ecker J.R."/>
            <person name="Palm C.J."/>
            <person name="Federspiel N.A."/>
            <person name="Kaul S."/>
            <person name="White O."/>
            <person name="Alonso J."/>
            <person name="Altafi H."/>
            <person name="Araujo R."/>
            <person name="Bowman C.L."/>
            <person name="Brooks S.Y."/>
            <person name="Buehler E."/>
            <person name="Chan A."/>
            <person name="Chao Q."/>
            <person name="Chen H."/>
            <person name="Cheuk R.F."/>
            <person name="Chin C.W."/>
            <person name="Chung M.K."/>
            <person name="Conn L."/>
            <person name="Conway A.B."/>
            <person name="Conway A.R."/>
            <person name="Creasy T.H."/>
            <person name="Dewar K."/>
            <person name="Dunn P."/>
            <person name="Etgu P."/>
            <person name="Feldblyum T.V."/>
            <person name="Feng J.-D."/>
            <person name="Fong B."/>
            <person name="Fujii C.Y."/>
            <person name="Gill J.E."/>
            <person name="Goldsmith A.D."/>
            <person name="Haas B."/>
            <person name="Hansen N.F."/>
            <person name="Hughes B."/>
            <person name="Huizar L."/>
            <person name="Hunter J.L."/>
            <person name="Jenkins J."/>
            <person name="Johnson-Hopson C."/>
            <person name="Khan S."/>
            <person name="Khaykin E."/>
            <person name="Kim C.J."/>
            <person name="Koo H.L."/>
            <person name="Kremenetskaia I."/>
            <person name="Kurtz D.B."/>
            <person name="Kwan A."/>
            <person name="Lam B."/>
            <person name="Langin-Hooper S."/>
            <person name="Lee A."/>
            <person name="Lee J.M."/>
            <person name="Lenz C.A."/>
            <person name="Li J.H."/>
            <person name="Li Y.-P."/>
            <person name="Lin X."/>
            <person name="Liu S.X."/>
            <person name="Liu Z.A."/>
            <person name="Luros J.S."/>
            <person name="Maiti R."/>
            <person name="Marziali A."/>
            <person name="Militscher J."/>
            <person name="Miranda M."/>
            <person name="Nguyen M."/>
            <person name="Nierman W.C."/>
            <person name="Osborne B.I."/>
            <person name="Pai G."/>
            <person name="Peterson J."/>
            <person name="Pham P.K."/>
            <person name="Rizzo M."/>
            <person name="Rooney T."/>
            <person name="Rowley D."/>
            <person name="Sakano H."/>
            <person name="Salzberg S.L."/>
            <person name="Schwartz J.R."/>
            <person name="Shinn P."/>
            <person name="Southwick A.M."/>
            <person name="Sun H."/>
            <person name="Tallon L.J."/>
            <person name="Tambunga G."/>
            <person name="Toriumi M.J."/>
            <person name="Town C.D."/>
            <person name="Utterback T."/>
            <person name="Van Aken S."/>
            <person name="Vaysberg M."/>
            <person name="Vysotskaia V.S."/>
            <person name="Walker M."/>
            <person name="Wu D."/>
            <person name="Yu G."/>
            <person name="Fraser C.M."/>
            <person name="Venter J.C."/>
            <person name="Davis R.W."/>
        </authorList>
    </citation>
    <scope>NUCLEOTIDE SEQUENCE [LARGE SCALE GENOMIC DNA]</scope>
    <source>
        <strain>cv. Columbia</strain>
    </source>
</reference>
<reference key="2">
    <citation type="journal article" date="2017" name="Plant J.">
        <title>Araport11: a complete reannotation of the Arabidopsis thaliana reference genome.</title>
        <authorList>
            <person name="Cheng C.Y."/>
            <person name="Krishnakumar V."/>
            <person name="Chan A.P."/>
            <person name="Thibaud-Nissen F."/>
            <person name="Schobel S."/>
            <person name="Town C.D."/>
        </authorList>
    </citation>
    <scope>GENOME REANNOTATION</scope>
    <source>
        <strain>cv. Columbia</strain>
    </source>
</reference>
<reference key="3">
    <citation type="journal article" date="2006" name="Trends Plant Sci.">
        <title>Translation initiation factors: a weak link in plant RNA virus infection.</title>
        <authorList>
            <person name="Robaglia C."/>
            <person name="Caranta C."/>
        </authorList>
    </citation>
    <scope>REVIEW</scope>
    <scope>SUBUNIT</scope>
</reference>
<protein>
    <recommendedName>
        <fullName evidence="7">Eukaryotic translation initiation factor 4E-2</fullName>
    </recommendedName>
    <alternativeName>
        <fullName evidence="7">eIF-4E-2</fullName>
    </alternativeName>
    <alternativeName>
        <fullName evidence="7">eIF4E-2</fullName>
    </alternativeName>
    <alternativeName>
        <fullName evidence="8">mRNA cap-binding protein</fullName>
    </alternativeName>
</protein>
<sequence length="240" mass="27301">MVVMDSPVSGRMADQNIDPNTTTSPSPIEKHVSAIKAISGDEKAPSKEKKNYASKKSTTVIQKSHCFQNSWTFWFDNPSSKSNQVIWGSSLRSLYTFATIEEFWSLYNNIHPPTKWVSGSDLYCFKDKIEPKWEDPICANGGKWTMFFPRATLESNWLNTLLALVGEQFDQGDEICGAVLNFRTRGDRISLWTKKAANEEAQLSIGKQWKELLGYNDTIGFIVHEDAKTLDRDAKRRYTV</sequence>
<accession>Q9C7P2</accession>
<accession>F4I1J3</accession>
<dbReference type="EMBL" id="AC068667">
    <property type="protein sequence ID" value="AAG51741.1"/>
    <property type="status" value="ALT_INIT"/>
    <property type="molecule type" value="Genomic_DNA"/>
</dbReference>
<dbReference type="EMBL" id="CP002684">
    <property type="protein sequence ID" value="AEE31107.2"/>
    <property type="molecule type" value="Genomic_DNA"/>
</dbReference>
<dbReference type="PIR" id="A86419">
    <property type="entry name" value="A86419"/>
</dbReference>
<dbReference type="SMR" id="Q9C7P2"/>
<dbReference type="FunCoup" id="Q9C7P2">
    <property type="interactions" value="2952"/>
</dbReference>
<dbReference type="STRING" id="3702.Q9C7P2"/>
<dbReference type="SwissPalm" id="Q9C7P2"/>
<dbReference type="PaxDb" id="3702-AT1G29590.2"/>
<dbReference type="EnsemblPlants" id="AT1G29590.1">
    <property type="protein sequence ID" value="AT1G29590.1"/>
    <property type="gene ID" value="AT1G29590"/>
</dbReference>
<dbReference type="GeneID" id="839836"/>
<dbReference type="Gramene" id="AT1G29590.1">
    <property type="protein sequence ID" value="AT1G29590.1"/>
    <property type="gene ID" value="AT1G29590"/>
</dbReference>
<dbReference type="KEGG" id="ath:AT1G29590"/>
<dbReference type="Araport" id="AT1G29590"/>
<dbReference type="TAIR" id="AT1G29590">
    <property type="gene designation" value="EIF4E3"/>
</dbReference>
<dbReference type="eggNOG" id="KOG1670">
    <property type="taxonomic scope" value="Eukaryota"/>
</dbReference>
<dbReference type="HOGENOM" id="CLU_043552_2_1_1"/>
<dbReference type="InParanoid" id="Q9C7P2"/>
<dbReference type="OMA" id="FWFDTPS"/>
<dbReference type="PhylomeDB" id="Q9C7P2"/>
<dbReference type="PRO" id="PR:Q9C7P2"/>
<dbReference type="Proteomes" id="UP000006548">
    <property type="component" value="Chromosome 1"/>
</dbReference>
<dbReference type="ExpressionAtlas" id="Q9C7P2">
    <property type="expression patterns" value="baseline and differential"/>
</dbReference>
<dbReference type="GO" id="GO:0005737">
    <property type="term" value="C:cytoplasm"/>
    <property type="evidence" value="ECO:0007669"/>
    <property type="project" value="UniProtKB-SubCell"/>
</dbReference>
<dbReference type="GO" id="GO:0005634">
    <property type="term" value="C:nucleus"/>
    <property type="evidence" value="ECO:0007669"/>
    <property type="project" value="UniProtKB-SubCell"/>
</dbReference>
<dbReference type="GO" id="GO:0003723">
    <property type="term" value="F:RNA binding"/>
    <property type="evidence" value="ECO:0007669"/>
    <property type="project" value="UniProtKB-KW"/>
</dbReference>
<dbReference type="GO" id="GO:0003743">
    <property type="term" value="F:translation initiation factor activity"/>
    <property type="evidence" value="ECO:0007669"/>
    <property type="project" value="UniProtKB-KW"/>
</dbReference>
<dbReference type="GO" id="GO:0006417">
    <property type="term" value="P:regulation of translation"/>
    <property type="evidence" value="ECO:0007669"/>
    <property type="project" value="UniProtKB-KW"/>
</dbReference>
<dbReference type="GO" id="GO:0009615">
    <property type="term" value="P:response to virus"/>
    <property type="evidence" value="ECO:0007669"/>
    <property type="project" value="UniProtKB-ARBA"/>
</dbReference>
<dbReference type="FunFam" id="3.30.760.10:FF:000003">
    <property type="entry name" value="Eukaryotic translation initiation factor 4E"/>
    <property type="match status" value="1"/>
</dbReference>
<dbReference type="Gene3D" id="3.30.760.10">
    <property type="entry name" value="RNA Cap, Translation Initiation Factor Eif4e"/>
    <property type="match status" value="1"/>
</dbReference>
<dbReference type="InterPro" id="IPR023398">
    <property type="entry name" value="TIF_eIF4e-like"/>
</dbReference>
<dbReference type="InterPro" id="IPR001040">
    <property type="entry name" value="TIF_eIF_4E"/>
</dbReference>
<dbReference type="InterPro" id="IPR019770">
    <property type="entry name" value="TIF_eIF_4E_CS"/>
</dbReference>
<dbReference type="PANTHER" id="PTHR11960">
    <property type="entry name" value="EUKARYOTIC TRANSLATION INITIATION FACTOR 4E RELATED"/>
    <property type="match status" value="1"/>
</dbReference>
<dbReference type="PANTHER" id="PTHR11960:SF44">
    <property type="entry name" value="EUKARYOTIC TRANSLATION INITIATION FACTOR 4E-2-RELATED"/>
    <property type="match status" value="1"/>
</dbReference>
<dbReference type="Pfam" id="PF01652">
    <property type="entry name" value="IF4E"/>
    <property type="match status" value="1"/>
</dbReference>
<dbReference type="SUPFAM" id="SSF55418">
    <property type="entry name" value="eIF4e-like"/>
    <property type="match status" value="1"/>
</dbReference>
<dbReference type="PROSITE" id="PS00813">
    <property type="entry name" value="IF4E"/>
    <property type="match status" value="1"/>
</dbReference>
<keyword id="KW-0963">Cytoplasm</keyword>
<keyword id="KW-1015">Disulfide bond</keyword>
<keyword id="KW-0396">Initiation factor</keyword>
<keyword id="KW-0539">Nucleus</keyword>
<keyword id="KW-0648">Protein biosynthesis</keyword>
<keyword id="KW-1185">Reference proteome</keyword>
<keyword id="KW-0694">RNA-binding</keyword>
<keyword id="KW-0810">Translation regulation</keyword>
<comment type="function">
    <text evidence="3">Component of the protein complex eIF4F, which is involved in the recognition of the mRNA cap, ATP-dependent unwinding of 5'-terminal secondary structure and recruitment of mRNA to the ribosome (By similarity). Recognizes and binds the 7-methylguanosine-containing mRNA cap during an early step in the initiation of protein synthesis and facilitates ribosome binding by inducing the unwinding of the mRNAs secondary structures (By similarity).</text>
</comment>
<comment type="subunit">
    <text evidence="6">EIF4F is a multi-subunit complex, the composition of which varies with external and internal environmental conditions (PubMed:16343979). It is composed of at least EIF4A, EIF4E and EIF4G (PubMed:16343979). EIF4E is also known to interact with other partners (PubMed:16343979). In higher plants two isoforms of EIF4F have been identified, named isoform EIF4F and isoform EIF(iso)4F (PubMed:16343979). Isoform EIF4F has subunits p220 and p26, whereas isoform EIF(iso)4F has subunits p82 and p28 (PubMed:16343979).</text>
</comment>
<comment type="subcellular location">
    <subcellularLocation>
        <location evidence="1">Nucleus</location>
    </subcellularLocation>
    <subcellularLocation>
        <location evidence="1">Cytoplasm</location>
    </subcellularLocation>
</comment>
<comment type="PTM">
    <text evidence="2">According to the redox status, the Cys-138-Cys-176 disulfide bridge may have a role in regulating protein function by affecting its ability to bind capped mRNA.</text>
</comment>
<comment type="similarity">
    <text evidence="8">Belongs to the eukaryotic initiation factor 4E family.</text>
</comment>
<comment type="sequence caution" evidence="8">
    <conflict type="erroneous initiation">
        <sequence resource="EMBL-CDS" id="AAG51741"/>
    </conflict>
    <text>Extended N-terminus.</text>
</comment>
<name>IF4E2_ARATH</name>
<gene>
    <name evidence="7" type="primary">EIF4E2</name>
    <name evidence="9" type="ordered locus">At1g29590</name>
    <name evidence="10" type="ORF">F15D2.16</name>
</gene>
<evidence type="ECO:0000250" key="1">
    <source>
        <dbReference type="UniProtKB" id="K0P2S0"/>
    </source>
</evidence>
<evidence type="ECO:0000250" key="2">
    <source>
        <dbReference type="UniProtKB" id="P29557"/>
    </source>
</evidence>
<evidence type="ECO:0000250" key="3">
    <source>
        <dbReference type="UniProtKB" id="P48599"/>
    </source>
</evidence>
<evidence type="ECO:0000250" key="4">
    <source>
        <dbReference type="UniProtKB" id="Q00LS8"/>
    </source>
</evidence>
<evidence type="ECO:0000256" key="5">
    <source>
        <dbReference type="SAM" id="MobiDB-lite"/>
    </source>
</evidence>
<evidence type="ECO:0000269" key="6">
    <source>
    </source>
</evidence>
<evidence type="ECO:0000303" key="7">
    <source>
    </source>
</evidence>
<evidence type="ECO:0000305" key="8"/>
<evidence type="ECO:0000312" key="9">
    <source>
        <dbReference type="Araport" id="AT1G29590"/>
    </source>
</evidence>
<evidence type="ECO:0000312" key="10">
    <source>
        <dbReference type="EMBL" id="AAG51741.1"/>
    </source>
</evidence>
<feature type="chain" id="PRO_0000193657" description="Eukaryotic translation initiation factor 4E-2">
    <location>
        <begin position="1"/>
        <end position="240"/>
    </location>
</feature>
<feature type="region of interest" description="Disordered" evidence="5">
    <location>
        <begin position="1"/>
        <end position="29"/>
    </location>
</feature>
<feature type="region of interest" description="EIF4G-binding" evidence="4">
    <location>
        <begin position="65"/>
        <end position="68"/>
    </location>
</feature>
<feature type="region of interest" description="EIF4G-binding" evidence="4">
    <location>
        <begin position="75"/>
        <end position="111"/>
    </location>
</feature>
<feature type="region of interest" description="EIF4G-binding" evidence="4">
    <location>
        <begin position="159"/>
        <end position="168"/>
    </location>
</feature>
<feature type="compositionally biased region" description="Polar residues" evidence="5">
    <location>
        <begin position="17"/>
        <end position="26"/>
    </location>
</feature>
<feature type="binding site" evidence="2">
    <location>
        <begin position="83"/>
        <end position="88"/>
    </location>
    <ligand>
        <name>mRNA</name>
        <dbReference type="ChEBI" id="CHEBI:33699"/>
    </ligand>
    <ligandPart>
        <name>N(7)-methylguanosine 5'-triphosphate group</name>
        <dbReference type="ChEBI" id="CHEBI:74429"/>
        <note>m7GTP residue in mRNA cap</note>
    </ligandPart>
</feature>
<feature type="binding site" evidence="2">
    <location>
        <position position="115"/>
    </location>
    <ligand>
        <name>mRNA</name>
        <dbReference type="ChEBI" id="CHEBI:33699"/>
    </ligand>
    <ligandPart>
        <name>N(7)-methylguanosine 5'-triphosphate group</name>
        <dbReference type="ChEBI" id="CHEBI:74429"/>
        <note>m7GTP residue in mRNA cap</note>
    </ligandPart>
</feature>
<feature type="binding site" evidence="2">
    <location>
        <begin position="133"/>
        <end position="134"/>
    </location>
    <ligand>
        <name>mRNA</name>
        <dbReference type="ChEBI" id="CHEBI:33699"/>
    </ligand>
    <ligandPart>
        <name>N(7)-methylguanosine 5'-triphosphate group</name>
        <dbReference type="ChEBI" id="CHEBI:74429"/>
        <note>m7GTP residue in mRNA cap</note>
    </ligandPart>
</feature>
<feature type="binding site" evidence="2">
    <location>
        <begin position="183"/>
        <end position="188"/>
    </location>
    <ligand>
        <name>mRNA</name>
        <dbReference type="ChEBI" id="CHEBI:33699"/>
    </ligand>
    <ligandPart>
        <name>N(7)-methylguanosine 5'-triphosphate group</name>
        <dbReference type="ChEBI" id="CHEBI:74429"/>
        <note>m7GTP residue in mRNA cap</note>
    </ligandPart>
</feature>
<feature type="binding site" evidence="4">
    <location>
        <begin position="228"/>
        <end position="232"/>
    </location>
    <ligand>
        <name>mRNA</name>
        <dbReference type="ChEBI" id="CHEBI:33699"/>
    </ligand>
    <ligandPart>
        <name>N(7)-methylguanosine 5'-triphosphate group</name>
        <dbReference type="ChEBI" id="CHEBI:74429"/>
        <note>m7GTP residue in mRNA cap</note>
    </ligandPart>
</feature>
<feature type="disulfide bond" evidence="2">
    <location>
        <begin position="138"/>
        <end position="176"/>
    </location>
</feature>
<proteinExistence type="evidence at protein level"/>
<organism>
    <name type="scientific">Arabidopsis thaliana</name>
    <name type="common">Mouse-ear cress</name>
    <dbReference type="NCBI Taxonomy" id="3702"/>
    <lineage>
        <taxon>Eukaryota</taxon>
        <taxon>Viridiplantae</taxon>
        <taxon>Streptophyta</taxon>
        <taxon>Embryophyta</taxon>
        <taxon>Tracheophyta</taxon>
        <taxon>Spermatophyta</taxon>
        <taxon>Magnoliopsida</taxon>
        <taxon>eudicotyledons</taxon>
        <taxon>Gunneridae</taxon>
        <taxon>Pentapetalae</taxon>
        <taxon>rosids</taxon>
        <taxon>malvids</taxon>
        <taxon>Brassicales</taxon>
        <taxon>Brassicaceae</taxon>
        <taxon>Camelineae</taxon>
        <taxon>Arabidopsis</taxon>
    </lineage>
</organism>